<reference key="1">
    <citation type="journal article" date="2006" name="J. Bacteriol.">
        <title>Complete genome sequence of Yersinia pestis strains Antiqua and Nepal516: evidence of gene reduction in an emerging pathogen.</title>
        <authorList>
            <person name="Chain P.S.G."/>
            <person name="Hu P."/>
            <person name="Malfatti S.A."/>
            <person name="Radnedge L."/>
            <person name="Larimer F."/>
            <person name="Vergez L.M."/>
            <person name="Worsham P."/>
            <person name="Chu M.C."/>
            <person name="Andersen G.L."/>
        </authorList>
    </citation>
    <scope>NUCLEOTIDE SEQUENCE [LARGE SCALE GENOMIC DNA]</scope>
    <source>
        <strain>Antiqua</strain>
    </source>
</reference>
<keyword id="KW-0021">Allosteric enzyme</keyword>
<keyword id="KW-0067">ATP-binding</keyword>
<keyword id="KW-0963">Cytoplasm</keyword>
<keyword id="KW-0418">Kinase</keyword>
<keyword id="KW-0547">Nucleotide-binding</keyword>
<keyword id="KW-0665">Pyrimidine biosynthesis</keyword>
<keyword id="KW-0808">Transferase</keyword>
<gene>
    <name evidence="1" type="primary">pyrH</name>
    <name type="ordered locus">YPA_0522</name>
</gene>
<proteinExistence type="inferred from homology"/>
<name>PYRH_YERPA</name>
<sequence length="241" mass="25973">MATNAKPVYQRILLKLSGEALQGAEGFGIDASVLDRMAQEVKELVELGIQVGVVIGGGNLFRGAGLAQAGMNRVVGDHMGMLATVMNGLAMRDALHRAYVNARLMSAIPLNGVCDNYSWAEAISLLRHNRVVIFAAGTGNPFFTTDSAACLRGIEIEADVVLKATKVDGVYSADPVKNPDATLYEQLTYQDVLEQELKVMDLAAFTLARDHNLPIRVFNMNKPGALRRVVMGENEGTLIAK</sequence>
<protein>
    <recommendedName>
        <fullName evidence="1">Uridylate kinase</fullName>
        <shortName evidence="1">UK</shortName>
        <ecNumber evidence="1">2.7.4.22</ecNumber>
    </recommendedName>
    <alternativeName>
        <fullName evidence="1">Uridine monophosphate kinase</fullName>
        <shortName evidence="1">UMP kinase</shortName>
        <shortName evidence="1">UMPK</shortName>
    </alternativeName>
</protein>
<comment type="function">
    <text evidence="1">Catalyzes the reversible phosphorylation of UMP to UDP.</text>
</comment>
<comment type="catalytic activity">
    <reaction evidence="1">
        <text>UMP + ATP = UDP + ADP</text>
        <dbReference type="Rhea" id="RHEA:24400"/>
        <dbReference type="ChEBI" id="CHEBI:30616"/>
        <dbReference type="ChEBI" id="CHEBI:57865"/>
        <dbReference type="ChEBI" id="CHEBI:58223"/>
        <dbReference type="ChEBI" id="CHEBI:456216"/>
        <dbReference type="EC" id="2.7.4.22"/>
    </reaction>
</comment>
<comment type="activity regulation">
    <text evidence="1">Allosterically activated by GTP. Inhibited by UTP.</text>
</comment>
<comment type="pathway">
    <text evidence="1">Pyrimidine metabolism; CTP biosynthesis via de novo pathway; UDP from UMP (UMPK route): step 1/1.</text>
</comment>
<comment type="subunit">
    <text evidence="1">Homohexamer.</text>
</comment>
<comment type="subcellular location">
    <subcellularLocation>
        <location evidence="1">Cytoplasm</location>
    </subcellularLocation>
</comment>
<comment type="similarity">
    <text evidence="1">Belongs to the UMP kinase family.</text>
</comment>
<dbReference type="EC" id="2.7.4.22" evidence="1"/>
<dbReference type="EMBL" id="CP000308">
    <property type="protein sequence ID" value="ABG12490.1"/>
    <property type="molecule type" value="Genomic_DNA"/>
</dbReference>
<dbReference type="RefSeq" id="WP_002212133.1">
    <property type="nucleotide sequence ID" value="NZ_CP009906.1"/>
</dbReference>
<dbReference type="SMR" id="Q1CAN2"/>
<dbReference type="GeneID" id="96662368"/>
<dbReference type="KEGG" id="ypa:YPA_0522"/>
<dbReference type="UniPathway" id="UPA00159">
    <property type="reaction ID" value="UER00275"/>
</dbReference>
<dbReference type="Proteomes" id="UP000001971">
    <property type="component" value="Chromosome"/>
</dbReference>
<dbReference type="GO" id="GO:0005829">
    <property type="term" value="C:cytosol"/>
    <property type="evidence" value="ECO:0007669"/>
    <property type="project" value="TreeGrafter"/>
</dbReference>
<dbReference type="GO" id="GO:0005524">
    <property type="term" value="F:ATP binding"/>
    <property type="evidence" value="ECO:0007669"/>
    <property type="project" value="UniProtKB-KW"/>
</dbReference>
<dbReference type="GO" id="GO:0033862">
    <property type="term" value="F:UMP kinase activity"/>
    <property type="evidence" value="ECO:0007669"/>
    <property type="project" value="UniProtKB-EC"/>
</dbReference>
<dbReference type="GO" id="GO:0044210">
    <property type="term" value="P:'de novo' CTP biosynthetic process"/>
    <property type="evidence" value="ECO:0007669"/>
    <property type="project" value="UniProtKB-UniRule"/>
</dbReference>
<dbReference type="GO" id="GO:0006225">
    <property type="term" value="P:UDP biosynthetic process"/>
    <property type="evidence" value="ECO:0007669"/>
    <property type="project" value="TreeGrafter"/>
</dbReference>
<dbReference type="CDD" id="cd04254">
    <property type="entry name" value="AAK_UMPK-PyrH-Ec"/>
    <property type="match status" value="1"/>
</dbReference>
<dbReference type="FunFam" id="3.40.1160.10:FF:000001">
    <property type="entry name" value="Uridylate kinase"/>
    <property type="match status" value="1"/>
</dbReference>
<dbReference type="Gene3D" id="3.40.1160.10">
    <property type="entry name" value="Acetylglutamate kinase-like"/>
    <property type="match status" value="1"/>
</dbReference>
<dbReference type="HAMAP" id="MF_01220_B">
    <property type="entry name" value="PyrH_B"/>
    <property type="match status" value="1"/>
</dbReference>
<dbReference type="InterPro" id="IPR036393">
    <property type="entry name" value="AceGlu_kinase-like_sf"/>
</dbReference>
<dbReference type="InterPro" id="IPR001048">
    <property type="entry name" value="Asp/Glu/Uridylate_kinase"/>
</dbReference>
<dbReference type="InterPro" id="IPR011817">
    <property type="entry name" value="Uridylate_kinase"/>
</dbReference>
<dbReference type="InterPro" id="IPR015963">
    <property type="entry name" value="Uridylate_kinase_bac"/>
</dbReference>
<dbReference type="NCBIfam" id="TIGR02075">
    <property type="entry name" value="pyrH_bact"/>
    <property type="match status" value="1"/>
</dbReference>
<dbReference type="PANTHER" id="PTHR42833">
    <property type="entry name" value="URIDYLATE KINASE"/>
    <property type="match status" value="1"/>
</dbReference>
<dbReference type="PANTHER" id="PTHR42833:SF4">
    <property type="entry name" value="URIDYLATE KINASE PUMPKIN, CHLOROPLASTIC"/>
    <property type="match status" value="1"/>
</dbReference>
<dbReference type="Pfam" id="PF00696">
    <property type="entry name" value="AA_kinase"/>
    <property type="match status" value="1"/>
</dbReference>
<dbReference type="PIRSF" id="PIRSF005650">
    <property type="entry name" value="Uridylate_kin"/>
    <property type="match status" value="1"/>
</dbReference>
<dbReference type="SUPFAM" id="SSF53633">
    <property type="entry name" value="Carbamate kinase-like"/>
    <property type="match status" value="1"/>
</dbReference>
<evidence type="ECO:0000255" key="1">
    <source>
        <dbReference type="HAMAP-Rule" id="MF_01220"/>
    </source>
</evidence>
<accession>Q1CAN2</accession>
<feature type="chain" id="PRO_1000054056" description="Uridylate kinase">
    <location>
        <begin position="1"/>
        <end position="241"/>
    </location>
</feature>
<feature type="region of interest" description="Involved in allosteric activation by GTP" evidence="1">
    <location>
        <begin position="23"/>
        <end position="28"/>
    </location>
</feature>
<feature type="binding site" evidence="1">
    <location>
        <begin position="15"/>
        <end position="18"/>
    </location>
    <ligand>
        <name>ATP</name>
        <dbReference type="ChEBI" id="CHEBI:30616"/>
    </ligand>
</feature>
<feature type="binding site" evidence="1">
    <location>
        <position position="57"/>
    </location>
    <ligand>
        <name>UMP</name>
        <dbReference type="ChEBI" id="CHEBI:57865"/>
    </ligand>
</feature>
<feature type="binding site" evidence="1">
    <location>
        <position position="58"/>
    </location>
    <ligand>
        <name>ATP</name>
        <dbReference type="ChEBI" id="CHEBI:30616"/>
    </ligand>
</feature>
<feature type="binding site" evidence="1">
    <location>
        <position position="62"/>
    </location>
    <ligand>
        <name>ATP</name>
        <dbReference type="ChEBI" id="CHEBI:30616"/>
    </ligand>
</feature>
<feature type="binding site" evidence="1">
    <location>
        <position position="77"/>
    </location>
    <ligand>
        <name>UMP</name>
        <dbReference type="ChEBI" id="CHEBI:57865"/>
    </ligand>
</feature>
<feature type="binding site" evidence="1">
    <location>
        <begin position="138"/>
        <end position="145"/>
    </location>
    <ligand>
        <name>UMP</name>
        <dbReference type="ChEBI" id="CHEBI:57865"/>
    </ligand>
</feature>
<feature type="binding site" evidence="1">
    <location>
        <position position="165"/>
    </location>
    <ligand>
        <name>ATP</name>
        <dbReference type="ChEBI" id="CHEBI:30616"/>
    </ligand>
</feature>
<feature type="binding site" evidence="1">
    <location>
        <position position="171"/>
    </location>
    <ligand>
        <name>ATP</name>
        <dbReference type="ChEBI" id="CHEBI:30616"/>
    </ligand>
</feature>
<feature type="binding site" evidence="1">
    <location>
        <position position="174"/>
    </location>
    <ligand>
        <name>ATP</name>
        <dbReference type="ChEBI" id="CHEBI:30616"/>
    </ligand>
</feature>
<organism>
    <name type="scientific">Yersinia pestis bv. Antiqua (strain Antiqua)</name>
    <dbReference type="NCBI Taxonomy" id="360102"/>
    <lineage>
        <taxon>Bacteria</taxon>
        <taxon>Pseudomonadati</taxon>
        <taxon>Pseudomonadota</taxon>
        <taxon>Gammaproteobacteria</taxon>
        <taxon>Enterobacterales</taxon>
        <taxon>Yersiniaceae</taxon>
        <taxon>Yersinia</taxon>
    </lineage>
</organism>